<organism>
    <name type="scientific">Salmonella newport (strain SL254)</name>
    <dbReference type="NCBI Taxonomy" id="423368"/>
    <lineage>
        <taxon>Bacteria</taxon>
        <taxon>Pseudomonadati</taxon>
        <taxon>Pseudomonadota</taxon>
        <taxon>Gammaproteobacteria</taxon>
        <taxon>Enterobacterales</taxon>
        <taxon>Enterobacteriaceae</taxon>
        <taxon>Salmonella</taxon>
    </lineage>
</organism>
<name>SLMA_SALNS</name>
<gene>
    <name evidence="1" type="primary">slmA</name>
    <name type="ordered locus">SNSL254_A4012</name>
</gene>
<dbReference type="EMBL" id="CP001113">
    <property type="protein sequence ID" value="ACF65057.1"/>
    <property type="molecule type" value="Genomic_DNA"/>
</dbReference>
<dbReference type="RefSeq" id="WP_000818607.1">
    <property type="nucleotide sequence ID" value="NZ_CCMR01000004.1"/>
</dbReference>
<dbReference type="SMR" id="B4SXE2"/>
<dbReference type="KEGG" id="see:SNSL254_A4012"/>
<dbReference type="HOGENOM" id="CLU_069356_5_0_6"/>
<dbReference type="Proteomes" id="UP000008824">
    <property type="component" value="Chromosome"/>
</dbReference>
<dbReference type="GO" id="GO:0043590">
    <property type="term" value="C:bacterial nucleoid"/>
    <property type="evidence" value="ECO:0007669"/>
    <property type="project" value="UniProtKB-UniRule"/>
</dbReference>
<dbReference type="GO" id="GO:0005737">
    <property type="term" value="C:cytoplasm"/>
    <property type="evidence" value="ECO:0007669"/>
    <property type="project" value="UniProtKB-UniRule"/>
</dbReference>
<dbReference type="GO" id="GO:0003700">
    <property type="term" value="F:DNA-binding transcription factor activity"/>
    <property type="evidence" value="ECO:0007669"/>
    <property type="project" value="TreeGrafter"/>
</dbReference>
<dbReference type="GO" id="GO:0000976">
    <property type="term" value="F:transcription cis-regulatory region binding"/>
    <property type="evidence" value="ECO:0007669"/>
    <property type="project" value="TreeGrafter"/>
</dbReference>
<dbReference type="GO" id="GO:0051301">
    <property type="term" value="P:cell division"/>
    <property type="evidence" value="ECO:0007669"/>
    <property type="project" value="UniProtKB-KW"/>
</dbReference>
<dbReference type="GO" id="GO:0010974">
    <property type="term" value="P:negative regulation of division septum assembly"/>
    <property type="evidence" value="ECO:0007669"/>
    <property type="project" value="InterPro"/>
</dbReference>
<dbReference type="FunFam" id="1.10.357.10:FF:000002">
    <property type="entry name" value="Nucleoid occlusion factor SlmA"/>
    <property type="match status" value="1"/>
</dbReference>
<dbReference type="Gene3D" id="1.10.357.10">
    <property type="entry name" value="Tetracycline Repressor, domain 2"/>
    <property type="match status" value="1"/>
</dbReference>
<dbReference type="HAMAP" id="MF_01839">
    <property type="entry name" value="NO_factor_SlmA"/>
    <property type="match status" value="1"/>
</dbReference>
<dbReference type="InterPro" id="IPR023772">
    <property type="entry name" value="DNA-bd_HTH_TetR-type_CS"/>
</dbReference>
<dbReference type="InterPro" id="IPR009057">
    <property type="entry name" value="Homeodomain-like_sf"/>
</dbReference>
<dbReference type="InterPro" id="IPR050109">
    <property type="entry name" value="HTH-type_TetR-like_transc_reg"/>
</dbReference>
<dbReference type="InterPro" id="IPR001647">
    <property type="entry name" value="HTH_TetR"/>
</dbReference>
<dbReference type="InterPro" id="IPR023769">
    <property type="entry name" value="NO_SlmA"/>
</dbReference>
<dbReference type="InterPro" id="IPR054580">
    <property type="entry name" value="SlmA-like_C"/>
</dbReference>
<dbReference type="InterPro" id="IPR036271">
    <property type="entry name" value="Tet_transcr_reg_TetR-rel_C_sf"/>
</dbReference>
<dbReference type="NCBIfam" id="NF007015">
    <property type="entry name" value="PRK09480.1"/>
    <property type="match status" value="1"/>
</dbReference>
<dbReference type="PANTHER" id="PTHR30055">
    <property type="entry name" value="HTH-TYPE TRANSCRIPTIONAL REGULATOR RUTR"/>
    <property type="match status" value="1"/>
</dbReference>
<dbReference type="PANTHER" id="PTHR30055:SF183">
    <property type="entry name" value="NUCLEOID OCCLUSION FACTOR SLMA"/>
    <property type="match status" value="1"/>
</dbReference>
<dbReference type="Pfam" id="PF22276">
    <property type="entry name" value="SlmA-like_C"/>
    <property type="match status" value="1"/>
</dbReference>
<dbReference type="Pfam" id="PF00440">
    <property type="entry name" value="TetR_N"/>
    <property type="match status" value="1"/>
</dbReference>
<dbReference type="SUPFAM" id="SSF46689">
    <property type="entry name" value="Homeodomain-like"/>
    <property type="match status" value="1"/>
</dbReference>
<dbReference type="SUPFAM" id="SSF48498">
    <property type="entry name" value="Tetracyclin repressor-like, C-terminal domain"/>
    <property type="match status" value="1"/>
</dbReference>
<dbReference type="PROSITE" id="PS01081">
    <property type="entry name" value="HTH_TETR_1"/>
    <property type="match status" value="1"/>
</dbReference>
<dbReference type="PROSITE" id="PS50977">
    <property type="entry name" value="HTH_TETR_2"/>
    <property type="match status" value="1"/>
</dbReference>
<protein>
    <recommendedName>
        <fullName evidence="1">Nucleoid occlusion factor SlmA</fullName>
    </recommendedName>
</protein>
<comment type="function">
    <text evidence="1">Required for nucleoid occlusion (NO) phenomenon, which prevents Z-ring formation and cell division over the nucleoid. Acts as a DNA-associated cell division inhibitor that binds simultaneously chromosomal DNA and FtsZ, and disrupts the assembly of FtsZ polymers. SlmA-DNA-binding sequences (SBS) are dispersed on non-Ter regions of the chromosome, preventing FtsZ polymerization at these regions.</text>
</comment>
<comment type="subunit">
    <text evidence="1">Homodimer. Interacts with FtsZ.</text>
</comment>
<comment type="subcellular location">
    <subcellularLocation>
        <location evidence="1">Cytoplasm</location>
        <location evidence="1">Nucleoid</location>
    </subcellularLocation>
</comment>
<comment type="similarity">
    <text evidence="1">Belongs to the nucleoid occlusion factor SlmA family.</text>
</comment>
<proteinExistence type="inferred from homology"/>
<sequence>MAEKQTAKRNRREEILQSLALMLESSDGSQRITTAKLAASVGVSEAALYRHFPSKTRMFDSLIEFIEDSLITRINLILKDEKNTSTRLRLIVLLILGFGERNPGLTRILTGHALMFEQDRLQGRINQLFERIEAQLRQVLREKRMREGEGYTTDENLLASQLLAFCEGMLSRFVRSEFKYRPTDDFDARWPLIAAQLQ</sequence>
<accession>B4SXE2</accession>
<feature type="chain" id="PRO_1000188398" description="Nucleoid occlusion factor SlmA">
    <location>
        <begin position="1"/>
        <end position="198"/>
    </location>
</feature>
<feature type="domain" description="HTH tetR-type" evidence="1">
    <location>
        <begin position="10"/>
        <end position="70"/>
    </location>
</feature>
<feature type="DNA-binding region" description="H-T-H motif" evidence="1">
    <location>
        <begin position="33"/>
        <end position="52"/>
    </location>
</feature>
<feature type="coiled-coil region" evidence="1">
    <location>
        <begin position="117"/>
        <end position="144"/>
    </location>
</feature>
<reference key="1">
    <citation type="journal article" date="2011" name="J. Bacteriol.">
        <title>Comparative genomics of 28 Salmonella enterica isolates: evidence for CRISPR-mediated adaptive sublineage evolution.</title>
        <authorList>
            <person name="Fricke W.F."/>
            <person name="Mammel M.K."/>
            <person name="McDermott P.F."/>
            <person name="Tartera C."/>
            <person name="White D.G."/>
            <person name="Leclerc J.E."/>
            <person name="Ravel J."/>
            <person name="Cebula T.A."/>
        </authorList>
    </citation>
    <scope>NUCLEOTIDE SEQUENCE [LARGE SCALE GENOMIC DNA]</scope>
    <source>
        <strain>SL254</strain>
    </source>
</reference>
<keyword id="KW-0131">Cell cycle</keyword>
<keyword id="KW-0132">Cell division</keyword>
<keyword id="KW-0175">Coiled coil</keyword>
<keyword id="KW-0963">Cytoplasm</keyword>
<keyword id="KW-0238">DNA-binding</keyword>
<evidence type="ECO:0000255" key="1">
    <source>
        <dbReference type="HAMAP-Rule" id="MF_01839"/>
    </source>
</evidence>